<comment type="function">
    <text evidence="6 7 8">Glycogen-branching enzyme participates in the glycogen biosynthetic process along with glycogenin and glycogen synthase. Generates alpha-1,6-glucosidic branches from alpha-1,4-linked glucose chains, to increase solubility of the glycogen polymer (PubMed:26199317, PubMed:8463281, PubMed:8613547).</text>
</comment>
<comment type="catalytic activity">
    <reaction evidence="6 8 11">
        <text>Transfers a segment of a (1-&gt;4)-alpha-D-glucan chain to a primary hydroxy group in a similar glucan chain.</text>
        <dbReference type="EC" id="2.4.1.18"/>
    </reaction>
</comment>
<comment type="pathway">
    <text evidence="6 7 8">Glycan biosynthesis; glycogen biosynthesis.</text>
</comment>
<comment type="subunit">
    <text evidence="10">Monomer.</text>
</comment>
<comment type="interaction">
    <interactant intactId="EBI-726347">
        <id>Q04446</id>
    </interactant>
    <interactant intactId="EBI-25492395">
        <id>PRO_0000449633</id>
        <label>rep</label>
        <dbReference type="UniProtKB" id="P0DTD1"/>
    </interactant>
    <organismsDiffer>true</organismsDiffer>
    <experiments>3</experiments>
</comment>
<comment type="domain">
    <text evidence="10">Binds its carbohydrate substrate close to the active site, but also via regions close to the N-terminus; this may result in increased affinity and therefore increased catalytic efficiency.</text>
</comment>
<comment type="disease" evidence="2 4 8">
    <disease id="DI-00524">
        <name>Glycogen storage disease 4</name>
        <acronym>GSD4</acronym>
        <description>A metabolic disorder characterized by the accumulation of an amylopectin-like polysaccharide. The typical clinical manifestation is liver disease of childhood, progressing to lethal hepatic cirrhosis. Most children with this condition die before two years of age. However, the liver disease is not always progressive. No treatment apart from liver transplantation has been found to prevent progression of the disease. There is also a neuromuscular form of glycogen storage disease type 4 that varies in onset (perinatal, congenital, juvenile, or adult) and severity.</description>
        <dbReference type="MIM" id="232500"/>
    </disease>
    <text>The disease is caused by variants affecting the gene represented in this entry.</text>
</comment>
<comment type="disease">
    <text evidence="4">Neuromuscular perinatal glycogen storage disease type 4 is associated with non-immune hydrops fetalis, a generalized edema of the fetus with fluid accumulation in the body cavities due to non-immune causes. Non-immune hydrops fetalis is not a diagnosis in itself but a symptom, a feature of many genetic disorders, and the end-stage of a wide variety of disorders.</text>
</comment>
<comment type="disease" evidence="3">
    <disease id="DI-00052">
        <name>Polyglucosan body neuropathy, adult form</name>
        <acronym>APBN</acronym>
        <description>A late-onset, slowly progressive disorder affecting the central and peripheral nervous systems. Patients typically present after age 40 years with a variable combination of cognitive impairment, pyramidal tetraparesis, peripheral neuropathy, and neurogenic bladder. Other manifestations include cerebellar dysfunction and extrapyramidal signs. The pathologic hallmark of APBN is the widespread accumulation of round, intracellular polyglucosan bodies throughout the nervous system, which are confined to neuronal and astrocytic processes.</description>
        <dbReference type="MIM" id="263570"/>
    </disease>
    <text>The disease is caused by variants affecting the gene represented in this entry.</text>
</comment>
<comment type="similarity">
    <text evidence="9">Belongs to the glycosyl hydrolase 13 family. GlgB subfamily.</text>
</comment>
<feature type="initiator methionine" description="Removed" evidence="15">
    <location>
        <position position="1"/>
    </location>
</feature>
<feature type="chain" id="PRO_0000188775" description="1,4-alpha-glucan-branching enzyme">
    <location>
        <begin position="2"/>
        <end position="702"/>
    </location>
</feature>
<feature type="active site" description="Nucleophile" evidence="10">
    <location>
        <position position="357"/>
    </location>
</feature>
<feature type="active site" description="Proton donor" evidence="10">
    <location>
        <position position="412"/>
    </location>
</feature>
<feature type="binding site" evidence="10 12 13">
    <location>
        <begin position="62"/>
        <end position="63"/>
    </location>
    <ligand>
        <name>substrate</name>
    </ligand>
</feature>
<feature type="binding site" evidence="10 12 13">
    <location>
        <begin position="91"/>
        <end position="93"/>
    </location>
    <ligand>
        <name>substrate</name>
    </ligand>
</feature>
<feature type="binding site" evidence="1">
    <location>
        <position position="107"/>
    </location>
    <ligand>
        <name>(1,4-alpha-D-glucosyl)n</name>
        <dbReference type="ChEBI" id="CHEBI:15444"/>
    </ligand>
</feature>
<feature type="binding site" evidence="10 12 13">
    <location>
        <begin position="118"/>
        <end position="121"/>
    </location>
    <ligand>
        <name>substrate</name>
    </ligand>
</feature>
<feature type="binding site" evidence="1">
    <location>
        <position position="143"/>
    </location>
    <ligand>
        <name>(1,4-alpha-D-glucosyl)n</name>
        <dbReference type="ChEBI" id="CHEBI:15444"/>
    </ligand>
</feature>
<feature type="binding site" evidence="10 12 13">
    <location>
        <begin position="333"/>
        <end position="336"/>
    </location>
    <ligand>
        <name>substrate</name>
    </ligand>
</feature>
<feature type="site" description="Transition state stabilizer" evidence="10">
    <location>
        <position position="481"/>
    </location>
</feature>
<feature type="modified residue" description="N-acetylalanine" evidence="15">
    <location>
        <position position="2"/>
    </location>
</feature>
<feature type="modified residue" description="Phosphotyrosine" evidence="14">
    <location>
        <position position="173"/>
    </location>
</feature>
<feature type="sequence variant" id="VAR_022109" description="In dbSNP:rs2229519.">
    <original>R</original>
    <variation>G</variation>
    <location>
        <position position="190"/>
    </location>
</feature>
<feature type="sequence variant" id="VAR_022429" description="In GSD4; loss of activity; dbSNP:rs137852886." evidence="8">
    <original>L</original>
    <variation>P</variation>
    <location>
        <position position="224"/>
    </location>
</feature>
<feature type="sequence variant" id="VAR_022430" description="In GSD4; loss of activity; dbSNP:rs137852887." evidence="8">
    <original>F</original>
    <variation>L</variation>
    <location>
        <position position="257"/>
    </location>
</feature>
<feature type="sequence variant" id="VAR_034747" description="In dbSNP:rs17856389." evidence="5">
    <original>T</original>
    <variation>S</variation>
    <location>
        <position position="265"/>
    </location>
</feature>
<feature type="sequence variant" id="VAR_022431" description="In GSD4; non-progressive form; impairs protein stability; 50% residual activity; dbSNP:rs80338671." evidence="6 8">
    <original>Y</original>
    <variation>S</variation>
    <location>
        <position position="329"/>
    </location>
</feature>
<feature type="sequence variant" id="VAR_034748" description="In dbSNP:rs2172397." evidence="5 7">
    <original>I</original>
    <variation>V</variation>
    <location>
        <position position="334"/>
    </location>
</feature>
<feature type="sequence variant" id="VAR_034749" description="In dbSNP:rs2228389.">
    <original>T</original>
    <variation>A</variation>
    <location>
        <position position="507"/>
    </location>
</feature>
<feature type="sequence variant" id="VAR_022432" description="In GSD4; loss of activity; dbSNP:rs80338672." evidence="8">
    <original>R</original>
    <variation>C</variation>
    <location>
        <position position="515"/>
    </location>
</feature>
<feature type="sequence variant" id="VAR_022433" description="In APBN; dbSNP:rs201958741." evidence="3">
    <original>R</original>
    <variation>H</variation>
    <location>
        <position position="515"/>
    </location>
</feature>
<feature type="sequence variant" id="VAR_022434" description="In GSD4 and APBN; dbSNP:rs80338673." evidence="2 3 4">
    <original>R</original>
    <variation>Q</variation>
    <location>
        <position position="524"/>
    </location>
</feature>
<feature type="sequence variant" id="VAR_022435" description="In GSD4; dbSNP:rs137852889." evidence="4">
    <original>H</original>
    <variation>R</variation>
    <location>
        <position position="545"/>
    </location>
</feature>
<feature type="sequence variant" id="VAR_022436" description="In GSD4; childhood neuromuscular form; 15 to 25% residual activity; dbSNP:rs137852891." evidence="4">
    <original>H</original>
    <variation>R</variation>
    <location>
        <position position="628"/>
    </location>
</feature>
<feature type="sequence conflict" description="In Ref. 1; AAA58642." evidence="9" ref="1">
    <original>C</original>
    <variation>S</variation>
    <location>
        <position position="88"/>
    </location>
</feature>
<feature type="helix" evidence="16">
    <location>
        <begin position="45"/>
        <end position="62"/>
    </location>
</feature>
<feature type="strand" evidence="18">
    <location>
        <begin position="63"/>
        <end position="65"/>
    </location>
</feature>
<feature type="helix" evidence="16">
    <location>
        <begin position="66"/>
        <end position="69"/>
    </location>
</feature>
<feature type="helix" evidence="16">
    <location>
        <begin position="70"/>
        <end position="74"/>
    </location>
</feature>
<feature type="strand" evidence="16">
    <location>
        <begin position="76"/>
        <end position="80"/>
    </location>
</feature>
<feature type="strand" evidence="16">
    <location>
        <begin position="86"/>
        <end position="91"/>
    </location>
</feature>
<feature type="strand" evidence="16">
    <location>
        <begin position="96"/>
        <end position="102"/>
    </location>
</feature>
<feature type="helix" evidence="16">
    <location>
        <begin position="103"/>
        <end position="105"/>
    </location>
</feature>
<feature type="strand" evidence="16">
    <location>
        <begin position="109"/>
        <end position="113"/>
    </location>
</feature>
<feature type="helix" evidence="17">
    <location>
        <begin position="118"/>
        <end position="120"/>
    </location>
</feature>
<feature type="strand" evidence="16">
    <location>
        <begin position="121"/>
        <end position="126"/>
    </location>
</feature>
<feature type="strand" evidence="16">
    <location>
        <begin position="141"/>
        <end position="147"/>
    </location>
</feature>
<feature type="strand" evidence="16">
    <location>
        <begin position="153"/>
        <end position="156"/>
    </location>
</feature>
<feature type="strand" evidence="16">
    <location>
        <begin position="174"/>
        <end position="176"/>
    </location>
</feature>
<feature type="strand" evidence="16">
    <location>
        <begin position="195"/>
        <end position="204"/>
    </location>
</feature>
<feature type="strand" evidence="16">
    <location>
        <begin position="207"/>
        <end position="212"/>
    </location>
</feature>
<feature type="helix" evidence="16">
    <location>
        <begin position="216"/>
        <end position="222"/>
    </location>
</feature>
<feature type="helix" evidence="16">
    <location>
        <begin position="224"/>
        <end position="230"/>
    </location>
</feature>
<feature type="strand" evidence="16">
    <location>
        <begin position="234"/>
        <end position="239"/>
    </location>
</feature>
<feature type="strand" evidence="17">
    <location>
        <begin position="241"/>
        <end position="244"/>
    </location>
</feature>
<feature type="helix" evidence="16">
    <location>
        <begin position="246"/>
        <end position="248"/>
    </location>
</feature>
<feature type="strand" evidence="16">
    <location>
        <begin position="254"/>
        <end position="259"/>
    </location>
</feature>
<feature type="helix" evidence="16">
    <location>
        <begin position="261"/>
        <end position="263"/>
    </location>
</feature>
<feature type="helix" evidence="16">
    <location>
        <begin position="266"/>
        <end position="278"/>
    </location>
</feature>
<feature type="strand" evidence="16">
    <location>
        <begin position="282"/>
        <end position="288"/>
    </location>
</feature>
<feature type="strand" evidence="17">
    <location>
        <begin position="292"/>
        <end position="294"/>
    </location>
</feature>
<feature type="strand" evidence="16">
    <location>
        <begin position="296"/>
        <end position="300"/>
    </location>
</feature>
<feature type="turn" evidence="16">
    <location>
        <begin position="301"/>
        <end position="304"/>
    </location>
</feature>
<feature type="strand" evidence="16">
    <location>
        <begin position="305"/>
        <end position="307"/>
    </location>
</feature>
<feature type="strand" evidence="16">
    <location>
        <begin position="309"/>
        <end position="311"/>
    </location>
</feature>
<feature type="helix" evidence="16">
    <location>
        <begin position="315"/>
        <end position="317"/>
    </location>
</feature>
<feature type="turn" evidence="16">
    <location>
        <begin position="320"/>
        <end position="323"/>
    </location>
</feature>
<feature type="helix" evidence="16">
    <location>
        <begin position="332"/>
        <end position="347"/>
    </location>
</feature>
<feature type="strand" evidence="16">
    <location>
        <begin position="353"/>
        <end position="357"/>
    </location>
</feature>
<feature type="helix" evidence="16">
    <location>
        <begin position="359"/>
        <end position="363"/>
    </location>
</feature>
<feature type="turn" evidence="17">
    <location>
        <begin position="379"/>
        <end position="382"/>
    </location>
</feature>
<feature type="helix" evidence="16">
    <location>
        <begin position="387"/>
        <end position="403"/>
    </location>
</feature>
<feature type="strand" evidence="16">
    <location>
        <begin position="408"/>
        <end position="411"/>
    </location>
</feature>
<feature type="turn" evidence="16">
    <location>
        <begin position="418"/>
        <end position="421"/>
    </location>
</feature>
<feature type="helix" evidence="16">
    <location>
        <begin position="424"/>
        <end position="426"/>
    </location>
</feature>
<feature type="strand" evidence="16">
    <location>
        <begin position="432"/>
        <end position="435"/>
    </location>
</feature>
<feature type="helix" evidence="16">
    <location>
        <begin position="438"/>
        <end position="449"/>
    </location>
</feature>
<feature type="helix" evidence="16">
    <location>
        <begin position="452"/>
        <end position="454"/>
    </location>
</feature>
<feature type="helix" evidence="16">
    <location>
        <begin position="457"/>
        <end position="465"/>
    </location>
</feature>
<feature type="strand" evidence="16">
    <location>
        <begin position="473"/>
        <end position="475"/>
    </location>
</feature>
<feature type="helix" evidence="16">
    <location>
        <begin position="481"/>
        <end position="483"/>
    </location>
</feature>
<feature type="helix" evidence="16">
    <location>
        <begin position="490"/>
        <end position="495"/>
    </location>
</feature>
<feature type="helix" evidence="16">
    <location>
        <begin position="496"/>
        <end position="500"/>
    </location>
</feature>
<feature type="helix" evidence="16">
    <location>
        <begin position="511"/>
        <end position="530"/>
    </location>
</feature>
<feature type="strand" evidence="16">
    <location>
        <begin position="533"/>
        <end position="538"/>
    </location>
</feature>
<feature type="helix" evidence="16">
    <location>
        <begin position="541"/>
        <end position="543"/>
    </location>
</feature>
<feature type="helix" evidence="16">
    <location>
        <begin position="554"/>
        <end position="556"/>
    </location>
</feature>
<feature type="strand" evidence="18">
    <location>
        <begin position="561"/>
        <end position="564"/>
    </location>
</feature>
<feature type="helix" evidence="16">
    <location>
        <begin position="567"/>
        <end position="570"/>
    </location>
</feature>
<feature type="helix" evidence="16">
    <location>
        <begin position="577"/>
        <end position="594"/>
    </location>
</feature>
<feature type="strand" evidence="16">
    <location>
        <begin position="597"/>
        <end position="599"/>
    </location>
</feature>
<feature type="strand" evidence="16">
    <location>
        <begin position="603"/>
        <end position="608"/>
    </location>
</feature>
<feature type="turn" evidence="16">
    <location>
        <begin position="609"/>
        <end position="612"/>
    </location>
</feature>
<feature type="strand" evidence="16">
    <location>
        <begin position="613"/>
        <end position="618"/>
    </location>
</feature>
<feature type="strand" evidence="16">
    <location>
        <begin position="621"/>
        <end position="626"/>
    </location>
</feature>
<feature type="strand" evidence="16">
    <location>
        <begin position="633"/>
        <end position="642"/>
    </location>
</feature>
<feature type="strand" evidence="16">
    <location>
        <begin position="644"/>
        <end position="651"/>
    </location>
</feature>
<feature type="helix" evidence="16">
    <location>
        <begin position="655"/>
        <end position="657"/>
    </location>
</feature>
<feature type="strand" evidence="16">
    <location>
        <begin position="669"/>
        <end position="673"/>
    </location>
</feature>
<feature type="strand" evidence="16">
    <location>
        <begin position="679"/>
        <end position="687"/>
    </location>
</feature>
<feature type="strand" evidence="16">
    <location>
        <begin position="691"/>
        <end position="698"/>
    </location>
</feature>
<sequence length="702" mass="80474">MAAPMTPAARPEDYEAALNAALADVPELARLLEIDPYLKPYAVDFQRRYKQFSQILKNIGENEGGIDKFSRGYESFGVHRCADGGLYCKEWAPGAEGVFLTGDFNGWNPFSYPYKKLDYGKWELYIPPKQNKSVLVPHGSKLKVVITSKSGEILYRISPWAKYVVREGDNVNYDWIHWDPEHSYEFKHSRPKKPRSLRIYESHVGISSHEGKVASYKHFTCNVLPRIKGLGYNCIQLMAIMEHAYYASFGYQITSFFAASSRYGTPEELQELVDTAHSMGIIVLLDVVHSHASKNSADGLNMFDGTDSCYFHSGPRGTHDLWDSRLFAYSSWEILRFLLSNIRWWLEEYRFDGFRFDGVTSMLYHHHGVGQGFSGDYSEYFGLQVDEDALTYLMLANHLVHTLCPDSITIAEDVSGMPALCSPISQGGGGFDYRLAMAIPDKWIQLLKEFKDEDWNMGDIVYTLTNRRYLEKCIAYAESHDQALVGDKSLAFWLMDAEMYTNMSVLTPFTPVIDRGIQLHKMIRLITHGLGGEGYLNFMGNEFGHPEWLDFPRKGNNESYHYARRQFHLTDDDLLRYKFLNNFDRDMNRLEERYGWLAAPQAYVSEKHEGNKIIAFERAGLLFIFNFHPSKSYTDYRVGTALPGKFKIVLDSDAAEYGGHQRLDHSTDFFSEAFEHNGRPYSLLVYIPSRVALILQNVDLPN</sequence>
<protein>
    <recommendedName>
        <fullName>1,4-alpha-glucan-branching enzyme</fullName>
        <ecNumber evidence="6 8 11">2.4.1.18</ecNumber>
    </recommendedName>
    <alternativeName>
        <fullName>Brancher enzyme</fullName>
    </alternativeName>
    <alternativeName>
        <fullName>Glycogen-branching enzyme</fullName>
    </alternativeName>
</protein>
<keyword id="KW-0002">3D-structure</keyword>
<keyword id="KW-0007">Acetylation</keyword>
<keyword id="KW-0225">Disease variant</keyword>
<keyword id="KW-0320">Glycogen biosynthesis</keyword>
<keyword id="KW-0322">Glycogen storage disease</keyword>
<keyword id="KW-0328">Glycosyltransferase</keyword>
<keyword id="KW-0622">Neuropathy</keyword>
<keyword id="KW-0597">Phosphoprotein</keyword>
<keyword id="KW-1267">Proteomics identification</keyword>
<keyword id="KW-1185">Reference proteome</keyword>
<keyword id="KW-0808">Transferase</keyword>
<accession>Q04446</accession>
<accession>B3KWV3</accession>
<accession>Q96EN0</accession>
<dbReference type="EC" id="2.4.1.18" evidence="6 8 11"/>
<dbReference type="EMBL" id="L07956">
    <property type="protein sequence ID" value="AAA58642.1"/>
    <property type="molecule type" value="mRNA"/>
</dbReference>
<dbReference type="EMBL" id="AK125918">
    <property type="protein sequence ID" value="BAG54265.1"/>
    <property type="molecule type" value="mRNA"/>
</dbReference>
<dbReference type="EMBL" id="AC017015">
    <property type="status" value="NOT_ANNOTATED_CDS"/>
    <property type="molecule type" value="Genomic_DNA"/>
</dbReference>
<dbReference type="EMBL" id="AC025029">
    <property type="status" value="NOT_ANNOTATED_CDS"/>
    <property type="molecule type" value="Genomic_DNA"/>
</dbReference>
<dbReference type="EMBL" id="AC099049">
    <property type="status" value="NOT_ANNOTATED_CDS"/>
    <property type="molecule type" value="Genomic_DNA"/>
</dbReference>
<dbReference type="EMBL" id="BC012098">
    <property type="protein sequence ID" value="AAH12098.1"/>
    <property type="molecule type" value="mRNA"/>
</dbReference>
<dbReference type="CCDS" id="CCDS54612.1"/>
<dbReference type="PIR" id="A46075">
    <property type="entry name" value="A46075"/>
</dbReference>
<dbReference type="RefSeq" id="NP_000149.4">
    <property type="nucleotide sequence ID" value="NM_000158.4"/>
</dbReference>
<dbReference type="PDB" id="4BZY">
    <property type="method" value="X-ray"/>
    <property type="resolution" value="2.75 A"/>
    <property type="chains" value="A/B/C=1-702"/>
</dbReference>
<dbReference type="PDB" id="5CLT">
    <property type="method" value="X-ray"/>
    <property type="resolution" value="2.79 A"/>
    <property type="chains" value="A/B/C=38-700"/>
</dbReference>
<dbReference type="PDB" id="5CLW">
    <property type="method" value="X-ray"/>
    <property type="resolution" value="2.80 A"/>
    <property type="chains" value="A/B/C=38-700"/>
</dbReference>
<dbReference type="PDBsum" id="4BZY"/>
<dbReference type="PDBsum" id="5CLT"/>
<dbReference type="PDBsum" id="5CLW"/>
<dbReference type="SMR" id="Q04446"/>
<dbReference type="BioGRID" id="108902">
    <property type="interactions" value="79"/>
</dbReference>
<dbReference type="FunCoup" id="Q04446">
    <property type="interactions" value="873"/>
</dbReference>
<dbReference type="IntAct" id="Q04446">
    <property type="interactions" value="22"/>
</dbReference>
<dbReference type="MINT" id="Q04446"/>
<dbReference type="STRING" id="9606.ENSP00000410833"/>
<dbReference type="CAZy" id="CBM48">
    <property type="family name" value="Carbohydrate-Binding Module Family 48"/>
</dbReference>
<dbReference type="CAZy" id="GH13">
    <property type="family name" value="Glycoside Hydrolase Family 13"/>
</dbReference>
<dbReference type="CarbonylDB" id="Q04446"/>
<dbReference type="GlyGen" id="Q04446">
    <property type="glycosylation" value="1 site, 1 O-linked glycan (1 site)"/>
</dbReference>
<dbReference type="iPTMnet" id="Q04446"/>
<dbReference type="MetOSite" id="Q04446"/>
<dbReference type="PhosphoSitePlus" id="Q04446"/>
<dbReference type="SwissPalm" id="Q04446"/>
<dbReference type="BioMuta" id="GBE1"/>
<dbReference type="DMDM" id="357529509"/>
<dbReference type="jPOST" id="Q04446"/>
<dbReference type="MassIVE" id="Q04446"/>
<dbReference type="PaxDb" id="9606-ENSP00000410833"/>
<dbReference type="PeptideAtlas" id="Q04446"/>
<dbReference type="ProteomicsDB" id="58242"/>
<dbReference type="Pumba" id="Q04446"/>
<dbReference type="Antibodypedia" id="32014">
    <property type="antibodies" value="390 antibodies from 28 providers"/>
</dbReference>
<dbReference type="DNASU" id="2632"/>
<dbReference type="Ensembl" id="ENST00000429644.7">
    <property type="protein sequence ID" value="ENSP00000410833.2"/>
    <property type="gene ID" value="ENSG00000114480.13"/>
</dbReference>
<dbReference type="GeneID" id="2632"/>
<dbReference type="KEGG" id="hsa:2632"/>
<dbReference type="MANE-Select" id="ENST00000429644.7">
    <property type="protein sequence ID" value="ENSP00000410833.2"/>
    <property type="RefSeq nucleotide sequence ID" value="NM_000158.4"/>
    <property type="RefSeq protein sequence ID" value="NP_000149.4"/>
</dbReference>
<dbReference type="UCSC" id="uc062lqz.1">
    <property type="organism name" value="human"/>
</dbReference>
<dbReference type="AGR" id="HGNC:4180"/>
<dbReference type="CTD" id="2632"/>
<dbReference type="DisGeNET" id="2632"/>
<dbReference type="GeneCards" id="GBE1"/>
<dbReference type="GeneReviews" id="GBE1"/>
<dbReference type="HGNC" id="HGNC:4180">
    <property type="gene designation" value="GBE1"/>
</dbReference>
<dbReference type="HPA" id="ENSG00000114480">
    <property type="expression patterns" value="Tissue enhanced (skeletal)"/>
</dbReference>
<dbReference type="MalaCards" id="GBE1"/>
<dbReference type="MIM" id="232500">
    <property type="type" value="phenotype"/>
</dbReference>
<dbReference type="MIM" id="263570">
    <property type="type" value="phenotype"/>
</dbReference>
<dbReference type="MIM" id="607839">
    <property type="type" value="gene"/>
</dbReference>
<dbReference type="neXtProt" id="NX_Q04446"/>
<dbReference type="OpenTargets" id="ENSG00000114480"/>
<dbReference type="Orphanet" id="206583">
    <property type="disease" value="Adult polyglucosan body disease"/>
</dbReference>
<dbReference type="Orphanet" id="308712">
    <property type="disease" value="Glycogen storage disease due to glycogen branching enzyme deficiency, adult neuromuscular form"/>
</dbReference>
<dbReference type="Orphanet" id="308684">
    <property type="disease" value="Glycogen storage disease due to glycogen branching enzyme deficiency, childhood combined hepatic and myopathic form"/>
</dbReference>
<dbReference type="Orphanet" id="308698">
    <property type="disease" value="Glycogen storage disease due to glycogen branching enzyme deficiency, childhood neuromuscular form"/>
</dbReference>
<dbReference type="Orphanet" id="308670">
    <property type="disease" value="Glycogen storage disease due to glycogen branching enzyme deficiency, congenital neuromuscular form"/>
</dbReference>
<dbReference type="Orphanet" id="308655">
    <property type="disease" value="Glycogen storage disease due to glycogen branching enzyme deficiency, fatal perinatal neuromuscular form"/>
</dbReference>
<dbReference type="Orphanet" id="308638">
    <property type="disease" value="Glycogen storage disease due to glycogen branching enzyme deficiency, non progressive hepatic form"/>
</dbReference>
<dbReference type="Orphanet" id="308621">
    <property type="disease" value="Glycogen storage disease due to glycogen branching enzyme deficiency, progressive hepatic form"/>
</dbReference>
<dbReference type="PharmGKB" id="PA28594"/>
<dbReference type="VEuPathDB" id="HostDB:ENSG00000114480"/>
<dbReference type="eggNOG" id="KOG0470">
    <property type="taxonomic scope" value="Eukaryota"/>
</dbReference>
<dbReference type="GeneTree" id="ENSGT00390000017040"/>
<dbReference type="InParanoid" id="Q04446"/>
<dbReference type="OMA" id="YEMHLGS"/>
<dbReference type="OrthoDB" id="196493at2759"/>
<dbReference type="PAN-GO" id="Q04446">
    <property type="GO annotations" value="3 GO annotations based on evolutionary models"/>
</dbReference>
<dbReference type="PhylomeDB" id="Q04446"/>
<dbReference type="TreeFam" id="TF300783"/>
<dbReference type="BioCyc" id="MetaCyc:HS03772-MONOMER"/>
<dbReference type="PathwayCommons" id="Q04446"/>
<dbReference type="Reactome" id="R-HSA-3322077">
    <property type="pathway name" value="Glycogen synthesis"/>
</dbReference>
<dbReference type="Reactome" id="R-HSA-3878781">
    <property type="pathway name" value="Glycogen storage disease type IV (GBE1)"/>
</dbReference>
<dbReference type="SignaLink" id="Q04446"/>
<dbReference type="SIGNOR" id="Q04446"/>
<dbReference type="UniPathway" id="UPA00164"/>
<dbReference type="BioGRID-ORCS" id="2632">
    <property type="hits" value="27 hits in 1154 CRISPR screens"/>
</dbReference>
<dbReference type="ChiTaRS" id="GBE1">
    <property type="organism name" value="human"/>
</dbReference>
<dbReference type="EvolutionaryTrace" id="Q04446"/>
<dbReference type="GeneWiki" id="GBE1"/>
<dbReference type="GenomeRNAi" id="2632"/>
<dbReference type="Pharos" id="Q04446">
    <property type="development level" value="Tbio"/>
</dbReference>
<dbReference type="PRO" id="PR:Q04446"/>
<dbReference type="Proteomes" id="UP000005640">
    <property type="component" value="Chromosome 3"/>
</dbReference>
<dbReference type="RNAct" id="Q04446">
    <property type="molecule type" value="protein"/>
</dbReference>
<dbReference type="Bgee" id="ENSG00000114480">
    <property type="expression patterns" value="Expressed in gluteal muscle and 208 other cell types or tissues"/>
</dbReference>
<dbReference type="ExpressionAtlas" id="Q04446">
    <property type="expression patterns" value="baseline and differential"/>
</dbReference>
<dbReference type="GO" id="GO:0005737">
    <property type="term" value="C:cytoplasm"/>
    <property type="evidence" value="ECO:0000250"/>
    <property type="project" value="UniProtKB"/>
</dbReference>
<dbReference type="GO" id="GO:0005829">
    <property type="term" value="C:cytosol"/>
    <property type="evidence" value="ECO:0000304"/>
    <property type="project" value="Reactome"/>
</dbReference>
<dbReference type="GO" id="GO:0070062">
    <property type="term" value="C:extracellular exosome"/>
    <property type="evidence" value="ECO:0007005"/>
    <property type="project" value="UniProtKB"/>
</dbReference>
<dbReference type="GO" id="GO:0003844">
    <property type="term" value="F:1,4-alpha-glucan branching enzyme activity"/>
    <property type="evidence" value="ECO:0000314"/>
    <property type="project" value="UniProtKB"/>
</dbReference>
<dbReference type="GO" id="GO:0030246">
    <property type="term" value="F:carbohydrate binding"/>
    <property type="evidence" value="ECO:0007669"/>
    <property type="project" value="Ensembl"/>
</dbReference>
<dbReference type="GO" id="GO:0043169">
    <property type="term" value="F:cation binding"/>
    <property type="evidence" value="ECO:0007669"/>
    <property type="project" value="InterPro"/>
</dbReference>
<dbReference type="GO" id="GO:0004553">
    <property type="term" value="F:hydrolase activity, hydrolyzing O-glycosyl compounds"/>
    <property type="evidence" value="ECO:0007669"/>
    <property type="project" value="InterPro"/>
</dbReference>
<dbReference type="GO" id="GO:0006091">
    <property type="term" value="P:generation of precursor metabolites and energy"/>
    <property type="evidence" value="ECO:0000304"/>
    <property type="project" value="ProtInc"/>
</dbReference>
<dbReference type="GO" id="GO:0005978">
    <property type="term" value="P:glycogen biosynthetic process"/>
    <property type="evidence" value="ECO:0000314"/>
    <property type="project" value="UniProtKB"/>
</dbReference>
<dbReference type="GO" id="GO:0005977">
    <property type="term" value="P:glycogen metabolic process"/>
    <property type="evidence" value="ECO:0000304"/>
    <property type="project" value="ProtInc"/>
</dbReference>
<dbReference type="GO" id="GO:0043524">
    <property type="term" value="P:negative regulation of neuron apoptotic process"/>
    <property type="evidence" value="ECO:0007669"/>
    <property type="project" value="Ensembl"/>
</dbReference>
<dbReference type="CDD" id="cd11321">
    <property type="entry name" value="AmyAc_bac_euk_BE"/>
    <property type="match status" value="1"/>
</dbReference>
<dbReference type="CDD" id="cd02854">
    <property type="entry name" value="E_set_GBE_euk_N"/>
    <property type="match status" value="1"/>
</dbReference>
<dbReference type="FunFam" id="3.20.20.80:FF:000001">
    <property type="entry name" value="1,4-alpha-glucan branching enzyme"/>
    <property type="match status" value="1"/>
</dbReference>
<dbReference type="FunFam" id="2.60.40.1180:FF:000014">
    <property type="entry name" value="1,4-alpha-glucan-branching enzyme"/>
    <property type="match status" value="1"/>
</dbReference>
<dbReference type="FunFam" id="2.60.40.10:FF:000550">
    <property type="entry name" value="1,4-alpha-glucan-branching enzyme isoform B"/>
    <property type="match status" value="1"/>
</dbReference>
<dbReference type="Gene3D" id="3.20.20.80">
    <property type="entry name" value="Glycosidases"/>
    <property type="match status" value="1"/>
</dbReference>
<dbReference type="Gene3D" id="2.60.40.1180">
    <property type="entry name" value="Golgi alpha-mannosidase II"/>
    <property type="match status" value="1"/>
</dbReference>
<dbReference type="Gene3D" id="2.60.40.10">
    <property type="entry name" value="Immunoglobulins"/>
    <property type="match status" value="1"/>
</dbReference>
<dbReference type="InterPro" id="IPR006048">
    <property type="entry name" value="A-amylase/branching_C"/>
</dbReference>
<dbReference type="InterPro" id="IPR037439">
    <property type="entry name" value="Branching_enzy"/>
</dbReference>
<dbReference type="InterPro" id="IPR006047">
    <property type="entry name" value="Glyco_hydro_13_cat_dom"/>
</dbReference>
<dbReference type="InterPro" id="IPR004193">
    <property type="entry name" value="Glyco_hydro_13_N"/>
</dbReference>
<dbReference type="InterPro" id="IPR013780">
    <property type="entry name" value="Glyco_hydro_b"/>
</dbReference>
<dbReference type="InterPro" id="IPR017853">
    <property type="entry name" value="Glycoside_hydrolase_SF"/>
</dbReference>
<dbReference type="InterPro" id="IPR013783">
    <property type="entry name" value="Ig-like_fold"/>
</dbReference>
<dbReference type="InterPro" id="IPR014756">
    <property type="entry name" value="Ig_E-set"/>
</dbReference>
<dbReference type="PANTHER" id="PTHR43651">
    <property type="entry name" value="1,4-ALPHA-GLUCAN-BRANCHING ENZYME"/>
    <property type="match status" value="1"/>
</dbReference>
<dbReference type="PANTHER" id="PTHR43651:SF3">
    <property type="entry name" value="1,4-ALPHA-GLUCAN-BRANCHING ENZYME"/>
    <property type="match status" value="1"/>
</dbReference>
<dbReference type="Pfam" id="PF00128">
    <property type="entry name" value="Alpha-amylase"/>
    <property type="match status" value="1"/>
</dbReference>
<dbReference type="Pfam" id="PF02806">
    <property type="entry name" value="Alpha-amylase_C"/>
    <property type="match status" value="1"/>
</dbReference>
<dbReference type="Pfam" id="PF02922">
    <property type="entry name" value="CBM_48"/>
    <property type="match status" value="1"/>
</dbReference>
<dbReference type="PIRSF" id="PIRSF000463">
    <property type="entry name" value="GlgB"/>
    <property type="match status" value="1"/>
</dbReference>
<dbReference type="SMART" id="SM00642">
    <property type="entry name" value="Aamy"/>
    <property type="match status" value="1"/>
</dbReference>
<dbReference type="SUPFAM" id="SSF51445">
    <property type="entry name" value="(Trans)glycosidases"/>
    <property type="match status" value="1"/>
</dbReference>
<dbReference type="SUPFAM" id="SSF81296">
    <property type="entry name" value="E set domains"/>
    <property type="match status" value="1"/>
</dbReference>
<dbReference type="SUPFAM" id="SSF51011">
    <property type="entry name" value="Glycosyl hydrolase domain"/>
    <property type="match status" value="1"/>
</dbReference>
<reference key="1">
    <citation type="journal article" date="1993" name="J. Biol. Chem.">
        <title>Isolation of human glycogen branching enzyme cDNAs by screening complementation in yeast.</title>
        <authorList>
            <person name="Thon V.J."/>
            <person name="Khalil M."/>
            <person name="Cannon J.F."/>
        </authorList>
    </citation>
    <scope>NUCLEOTIDE SEQUENCE [MRNA]</scope>
    <scope>FUNCTION</scope>
    <scope>CATALYTIC ACTIVITY</scope>
    <scope>PATHWAY</scope>
    <scope>VARIANT VAL-334</scope>
    <source>
        <tissue>Liver</tissue>
    </source>
</reference>
<reference key="2">
    <citation type="journal article" date="2004" name="Nat. Genet.">
        <title>Complete sequencing and characterization of 21,243 full-length human cDNAs.</title>
        <authorList>
            <person name="Ota T."/>
            <person name="Suzuki Y."/>
            <person name="Nishikawa T."/>
            <person name="Otsuki T."/>
            <person name="Sugiyama T."/>
            <person name="Irie R."/>
            <person name="Wakamatsu A."/>
            <person name="Hayashi K."/>
            <person name="Sato H."/>
            <person name="Nagai K."/>
            <person name="Kimura K."/>
            <person name="Makita H."/>
            <person name="Sekine M."/>
            <person name="Obayashi M."/>
            <person name="Nishi T."/>
            <person name="Shibahara T."/>
            <person name="Tanaka T."/>
            <person name="Ishii S."/>
            <person name="Yamamoto J."/>
            <person name="Saito K."/>
            <person name="Kawai Y."/>
            <person name="Isono Y."/>
            <person name="Nakamura Y."/>
            <person name="Nagahari K."/>
            <person name="Murakami K."/>
            <person name="Yasuda T."/>
            <person name="Iwayanagi T."/>
            <person name="Wagatsuma M."/>
            <person name="Shiratori A."/>
            <person name="Sudo H."/>
            <person name="Hosoiri T."/>
            <person name="Kaku Y."/>
            <person name="Kodaira H."/>
            <person name="Kondo H."/>
            <person name="Sugawara M."/>
            <person name="Takahashi M."/>
            <person name="Kanda K."/>
            <person name="Yokoi T."/>
            <person name="Furuya T."/>
            <person name="Kikkawa E."/>
            <person name="Omura Y."/>
            <person name="Abe K."/>
            <person name="Kamihara K."/>
            <person name="Katsuta N."/>
            <person name="Sato K."/>
            <person name="Tanikawa M."/>
            <person name="Yamazaki M."/>
            <person name="Ninomiya K."/>
            <person name="Ishibashi T."/>
            <person name="Yamashita H."/>
            <person name="Murakawa K."/>
            <person name="Fujimori K."/>
            <person name="Tanai H."/>
            <person name="Kimata M."/>
            <person name="Watanabe M."/>
            <person name="Hiraoka S."/>
            <person name="Chiba Y."/>
            <person name="Ishida S."/>
            <person name="Ono Y."/>
            <person name="Takiguchi S."/>
            <person name="Watanabe S."/>
            <person name="Yosida M."/>
            <person name="Hotuta T."/>
            <person name="Kusano J."/>
            <person name="Kanehori K."/>
            <person name="Takahashi-Fujii A."/>
            <person name="Hara H."/>
            <person name="Tanase T.-O."/>
            <person name="Nomura Y."/>
            <person name="Togiya S."/>
            <person name="Komai F."/>
            <person name="Hara R."/>
            <person name="Takeuchi K."/>
            <person name="Arita M."/>
            <person name="Imose N."/>
            <person name="Musashino K."/>
            <person name="Yuuki H."/>
            <person name="Oshima A."/>
            <person name="Sasaki N."/>
            <person name="Aotsuka S."/>
            <person name="Yoshikawa Y."/>
            <person name="Matsunawa H."/>
            <person name="Ichihara T."/>
            <person name="Shiohata N."/>
            <person name="Sano S."/>
            <person name="Moriya S."/>
            <person name="Momiyama H."/>
            <person name="Satoh N."/>
            <person name="Takami S."/>
            <person name="Terashima Y."/>
            <person name="Suzuki O."/>
            <person name="Nakagawa S."/>
            <person name="Senoh A."/>
            <person name="Mizoguchi H."/>
            <person name="Goto Y."/>
            <person name="Shimizu F."/>
            <person name="Wakebe H."/>
            <person name="Hishigaki H."/>
            <person name="Watanabe T."/>
            <person name="Sugiyama A."/>
            <person name="Takemoto M."/>
            <person name="Kawakami B."/>
            <person name="Yamazaki M."/>
            <person name="Watanabe K."/>
            <person name="Kumagai A."/>
            <person name="Itakura S."/>
            <person name="Fukuzumi Y."/>
            <person name="Fujimori Y."/>
            <person name="Komiyama M."/>
            <person name="Tashiro H."/>
            <person name="Tanigami A."/>
            <person name="Fujiwara T."/>
            <person name="Ono T."/>
            <person name="Yamada K."/>
            <person name="Fujii Y."/>
            <person name="Ozaki K."/>
            <person name="Hirao M."/>
            <person name="Ohmori Y."/>
            <person name="Kawabata A."/>
            <person name="Hikiji T."/>
            <person name="Kobatake N."/>
            <person name="Inagaki H."/>
            <person name="Ikema Y."/>
            <person name="Okamoto S."/>
            <person name="Okitani R."/>
            <person name="Kawakami T."/>
            <person name="Noguchi S."/>
            <person name="Itoh T."/>
            <person name="Shigeta K."/>
            <person name="Senba T."/>
            <person name="Matsumura K."/>
            <person name="Nakajima Y."/>
            <person name="Mizuno T."/>
            <person name="Morinaga M."/>
            <person name="Sasaki M."/>
            <person name="Togashi T."/>
            <person name="Oyama M."/>
            <person name="Hata H."/>
            <person name="Watanabe M."/>
            <person name="Komatsu T."/>
            <person name="Mizushima-Sugano J."/>
            <person name="Satoh T."/>
            <person name="Shirai Y."/>
            <person name="Takahashi Y."/>
            <person name="Nakagawa K."/>
            <person name="Okumura K."/>
            <person name="Nagase T."/>
            <person name="Nomura N."/>
            <person name="Kikuchi H."/>
            <person name="Masuho Y."/>
            <person name="Yamashita R."/>
            <person name="Nakai K."/>
            <person name="Yada T."/>
            <person name="Nakamura Y."/>
            <person name="Ohara O."/>
            <person name="Isogai T."/>
            <person name="Sugano S."/>
        </authorList>
    </citation>
    <scope>NUCLEOTIDE SEQUENCE [LARGE SCALE MRNA]</scope>
    <source>
        <tissue>Testis</tissue>
    </source>
</reference>
<reference key="3">
    <citation type="journal article" date="2006" name="Nature">
        <title>The DNA sequence, annotation and analysis of human chromosome 3.</title>
        <authorList>
            <person name="Muzny D.M."/>
            <person name="Scherer S.E."/>
            <person name="Kaul R."/>
            <person name="Wang J."/>
            <person name="Yu J."/>
            <person name="Sudbrak R."/>
            <person name="Buhay C.J."/>
            <person name="Chen R."/>
            <person name="Cree A."/>
            <person name="Ding Y."/>
            <person name="Dugan-Rocha S."/>
            <person name="Gill R."/>
            <person name="Gunaratne P."/>
            <person name="Harris R.A."/>
            <person name="Hawes A.C."/>
            <person name="Hernandez J."/>
            <person name="Hodgson A.V."/>
            <person name="Hume J."/>
            <person name="Jackson A."/>
            <person name="Khan Z.M."/>
            <person name="Kovar-Smith C."/>
            <person name="Lewis L.R."/>
            <person name="Lozado R.J."/>
            <person name="Metzker M.L."/>
            <person name="Milosavljevic A."/>
            <person name="Miner G.R."/>
            <person name="Morgan M.B."/>
            <person name="Nazareth L.V."/>
            <person name="Scott G."/>
            <person name="Sodergren E."/>
            <person name="Song X.-Z."/>
            <person name="Steffen D."/>
            <person name="Wei S."/>
            <person name="Wheeler D.A."/>
            <person name="Wright M.W."/>
            <person name="Worley K.C."/>
            <person name="Yuan Y."/>
            <person name="Zhang Z."/>
            <person name="Adams C.Q."/>
            <person name="Ansari-Lari M.A."/>
            <person name="Ayele M."/>
            <person name="Brown M.J."/>
            <person name="Chen G."/>
            <person name="Chen Z."/>
            <person name="Clendenning J."/>
            <person name="Clerc-Blankenburg K.P."/>
            <person name="Chen R."/>
            <person name="Chen Z."/>
            <person name="Davis C."/>
            <person name="Delgado O."/>
            <person name="Dinh H.H."/>
            <person name="Dong W."/>
            <person name="Draper H."/>
            <person name="Ernst S."/>
            <person name="Fu G."/>
            <person name="Gonzalez-Garay M.L."/>
            <person name="Garcia D.K."/>
            <person name="Gillett W."/>
            <person name="Gu J."/>
            <person name="Hao B."/>
            <person name="Haugen E."/>
            <person name="Havlak P."/>
            <person name="He X."/>
            <person name="Hennig S."/>
            <person name="Hu S."/>
            <person name="Huang W."/>
            <person name="Jackson L.R."/>
            <person name="Jacob L.S."/>
            <person name="Kelly S.H."/>
            <person name="Kube M."/>
            <person name="Levy R."/>
            <person name="Li Z."/>
            <person name="Liu B."/>
            <person name="Liu J."/>
            <person name="Liu W."/>
            <person name="Lu J."/>
            <person name="Maheshwari M."/>
            <person name="Nguyen B.-V."/>
            <person name="Okwuonu G.O."/>
            <person name="Palmeiri A."/>
            <person name="Pasternak S."/>
            <person name="Perez L.M."/>
            <person name="Phelps K.A."/>
            <person name="Plopper F.J."/>
            <person name="Qiang B."/>
            <person name="Raymond C."/>
            <person name="Rodriguez R."/>
            <person name="Saenphimmachak C."/>
            <person name="Santibanez J."/>
            <person name="Shen H."/>
            <person name="Shen Y."/>
            <person name="Subramanian S."/>
            <person name="Tabor P.E."/>
            <person name="Verduzco D."/>
            <person name="Waldron L."/>
            <person name="Wang J."/>
            <person name="Wang J."/>
            <person name="Wang Q."/>
            <person name="Williams G.A."/>
            <person name="Wong G.K.-S."/>
            <person name="Yao Z."/>
            <person name="Zhang J."/>
            <person name="Zhang X."/>
            <person name="Zhao G."/>
            <person name="Zhou J."/>
            <person name="Zhou Y."/>
            <person name="Nelson D."/>
            <person name="Lehrach H."/>
            <person name="Reinhardt R."/>
            <person name="Naylor S.L."/>
            <person name="Yang H."/>
            <person name="Olson M."/>
            <person name="Weinstock G."/>
            <person name="Gibbs R.A."/>
        </authorList>
    </citation>
    <scope>NUCLEOTIDE SEQUENCE [LARGE SCALE GENOMIC DNA]</scope>
</reference>
<reference key="4">
    <citation type="journal article" date="2004" name="Genome Res.">
        <title>The status, quality, and expansion of the NIH full-length cDNA project: the Mammalian Gene Collection (MGC).</title>
        <authorList>
            <consortium name="The MGC Project Team"/>
        </authorList>
    </citation>
    <scope>NUCLEOTIDE SEQUENCE [LARGE SCALE MRNA]</scope>
    <scope>VARIANTS SER-265 AND VAL-334</scope>
    <source>
        <tissue>B-cell</tissue>
    </source>
</reference>
<reference key="5">
    <citation type="journal article" date="2005" name="Nat. Biotechnol.">
        <title>Immunoaffinity profiling of tyrosine phosphorylation in cancer cells.</title>
        <authorList>
            <person name="Rush J."/>
            <person name="Moritz A."/>
            <person name="Lee K.A."/>
            <person name="Guo A."/>
            <person name="Goss V.L."/>
            <person name="Spek E.J."/>
            <person name="Zhang H."/>
            <person name="Zha X.-M."/>
            <person name="Polakiewicz R.D."/>
            <person name="Comb M.J."/>
        </authorList>
    </citation>
    <scope>PHOSPHORYLATION [LARGE SCALE ANALYSIS] AT TYR-173</scope>
    <scope>IDENTIFICATION BY MASS SPECTROMETRY [LARGE SCALE ANALYSIS]</scope>
</reference>
<reference key="6">
    <citation type="journal article" date="2011" name="BMC Syst. Biol.">
        <title>Initial characterization of the human central proteome.</title>
        <authorList>
            <person name="Burkard T.R."/>
            <person name="Planyavsky M."/>
            <person name="Kaupe I."/>
            <person name="Breitwieser F.P."/>
            <person name="Buerckstuemmer T."/>
            <person name="Bennett K.L."/>
            <person name="Superti-Furga G."/>
            <person name="Colinge J."/>
        </authorList>
    </citation>
    <scope>IDENTIFICATION BY MASS SPECTROMETRY [LARGE SCALE ANALYSIS]</scope>
</reference>
<reference key="7">
    <citation type="journal article" date="2012" name="Mol. Cell. Proteomics">
        <title>Comparative large-scale characterisation of plant vs. mammal proteins reveals similar and idiosyncratic N-alpha acetylation features.</title>
        <authorList>
            <person name="Bienvenut W.V."/>
            <person name="Sumpton D."/>
            <person name="Martinez A."/>
            <person name="Lilla S."/>
            <person name="Espagne C."/>
            <person name="Meinnel T."/>
            <person name="Giglione C."/>
        </authorList>
    </citation>
    <scope>ACETYLATION [LARGE SCALE ANALYSIS] AT ALA-2</scope>
    <scope>CLEAVAGE OF INITIATOR METHIONINE [LARGE SCALE ANALYSIS]</scope>
    <scope>IDENTIFICATION BY MASS SPECTROMETRY [LARGE SCALE ANALYSIS]</scope>
</reference>
<reference key="8">
    <citation type="journal article" date="2014" name="J. Proteomics">
        <title>An enzyme assisted RP-RPLC approach for in-depth analysis of human liver phosphoproteome.</title>
        <authorList>
            <person name="Bian Y."/>
            <person name="Song C."/>
            <person name="Cheng K."/>
            <person name="Dong M."/>
            <person name="Wang F."/>
            <person name="Huang J."/>
            <person name="Sun D."/>
            <person name="Wang L."/>
            <person name="Ye M."/>
            <person name="Zou H."/>
        </authorList>
    </citation>
    <scope>IDENTIFICATION BY MASS SPECTROMETRY [LARGE SCALE ANALYSIS]</scope>
    <source>
        <tissue>Liver</tissue>
    </source>
</reference>
<reference key="9">
    <citation type="journal article" date="2015" name="Hum. Mol. Genet.">
        <title>Structural basis of glycogen branching enzyme deficiency and pharmacologic rescue by rational peptide design.</title>
        <authorList>
            <person name="Froese D.S."/>
            <person name="Michaeli A."/>
            <person name="McCorvie T.J."/>
            <person name="Krojer T."/>
            <person name="Sasi M."/>
            <person name="Melaev E."/>
            <person name="Goldblum A."/>
            <person name="Zatsepin M."/>
            <person name="Lossos A."/>
            <person name="Alvarez R."/>
            <person name="Escriba P.V."/>
            <person name="Minassian B.A."/>
            <person name="von Delft F."/>
            <person name="Kakhlon O."/>
            <person name="Yue W.W."/>
        </authorList>
    </citation>
    <scope>X-RAY CRYSTALLOGRAPHY (2.75 ANGSTROMS) IN COMPLEXES WITH MALTOHEPTAOSE AND ACARBOSE</scope>
    <scope>CATALYTIC ACTIVITY</scope>
    <scope>FUNCTION</scope>
    <scope>SUBUNIT</scope>
    <scope>PATHWAY</scope>
    <scope>ACTIVE SITE</scope>
    <scope>CHARACTERIZATION OF VARIANT GSDA SER-329</scope>
    <scope>DOMAIN</scope>
</reference>
<reference key="10">
    <citation type="journal article" date="1996" name="J. Clin. Invest.">
        <title>Hepatic and neuromuscular forms of glycogen storage disease type IV caused by mutations in the same glycogen-branching enzyme gene.</title>
        <authorList>
            <person name="Bao Y."/>
            <person name="Kishnani P."/>
            <person name="Wu J.Y."/>
            <person name="Chen Y.T."/>
        </authorList>
    </citation>
    <scope>VARIANTS GSD4 PRO-224; LEU-257; SER-329 AND CYS-515</scope>
    <scope>CHARACTERIZATION OF VARIANTS GSD4 PRO-224; LEU-257; SER-329 AND CYS-515</scope>
    <scope>FUNCTION</scope>
    <scope>PATHWAY</scope>
    <scope>CATALYTIC ACTIVITY</scope>
</reference>
<reference key="11">
    <citation type="journal article" date="1999" name="Neuromuscul. Disord.">
        <title>A novel missense mutation in the glycogen branching enzyme gene in a child with myopathy and hepatopathy.</title>
        <authorList>
            <person name="Bruno C."/>
            <person name="DiRocco M."/>
            <person name="Lamba L.D."/>
            <person name="Bado M."/>
            <person name="Marino C."/>
            <person name="Tsujino S."/>
            <person name="Shanske S."/>
            <person name="Stella G."/>
            <person name="Minetti C."/>
            <person name="van Diggelen O.P."/>
            <person name="DiMauro S."/>
        </authorList>
    </citation>
    <scope>VARIANT GSD4 GLN-524</scope>
</reference>
<reference key="12">
    <citation type="journal article" date="2000" name="Ann. Neurol.">
        <title>Novel missense mutations in the glycogen-branching enzyme gene in adult polyglucosan body disease.</title>
        <authorList>
            <person name="Ziemssen F."/>
            <person name="Sindern E."/>
            <person name="Schroder J.M."/>
            <person name="Shin Y.S."/>
            <person name="Zange J."/>
            <person name="Kilimann M.W."/>
            <person name="Malin J.P."/>
            <person name="Vorgerd M."/>
        </authorList>
    </citation>
    <scope>VARIANTS APBN HIS-515 AND GLN-524</scope>
</reference>
<reference key="13">
    <citation type="journal article" date="2004" name="Neurology">
        <title>Clinical and genetic heterogeneity of branching enzyme deficiency (glycogenosis type IV).</title>
        <authorList>
            <person name="Bruno C."/>
            <person name="van Diggelen O.P."/>
            <person name="Cassandrini D."/>
            <person name="Gimpelev M."/>
            <person name="Giuffre B."/>
            <person name="Donati M.A."/>
            <person name="Introvini P."/>
            <person name="Alegria A."/>
            <person name="Assereto S."/>
            <person name="Morandi L."/>
            <person name="Mora M."/>
            <person name="Tonoli E."/>
            <person name="Mascelli S."/>
            <person name="Traverso M."/>
            <person name="Pasquini E."/>
            <person name="Bado M."/>
            <person name="Vilarinho L."/>
            <person name="van Noort G."/>
            <person name="Mosca F."/>
            <person name="DiMauro S."/>
            <person name="Zara F."/>
            <person name="Minetti C."/>
        </authorList>
    </citation>
    <scope>INVOLVEMENT IN NEUROMUSCULAR PERINATAL GSD4</scope>
    <scope>VARIANTS GSD4 GLN-524; ARG-545 AND ARG-628</scope>
</reference>
<evidence type="ECO:0000250" key="1">
    <source>
        <dbReference type="UniProtKB" id="Q6FJV0"/>
    </source>
</evidence>
<evidence type="ECO:0000269" key="2">
    <source>
    </source>
</evidence>
<evidence type="ECO:0000269" key="3">
    <source>
    </source>
</evidence>
<evidence type="ECO:0000269" key="4">
    <source>
    </source>
</evidence>
<evidence type="ECO:0000269" key="5">
    <source>
    </source>
</evidence>
<evidence type="ECO:0000269" key="6">
    <source>
    </source>
</evidence>
<evidence type="ECO:0000269" key="7">
    <source>
    </source>
</evidence>
<evidence type="ECO:0000269" key="8">
    <source>
    </source>
</evidence>
<evidence type="ECO:0000305" key="9"/>
<evidence type="ECO:0000305" key="10">
    <source>
    </source>
</evidence>
<evidence type="ECO:0000305" key="11">
    <source>
    </source>
</evidence>
<evidence type="ECO:0007744" key="12">
    <source>
        <dbReference type="PDB" id="5CLT"/>
    </source>
</evidence>
<evidence type="ECO:0007744" key="13">
    <source>
        <dbReference type="PDB" id="5CLW"/>
    </source>
</evidence>
<evidence type="ECO:0007744" key="14">
    <source>
    </source>
</evidence>
<evidence type="ECO:0007744" key="15">
    <source>
    </source>
</evidence>
<evidence type="ECO:0007829" key="16">
    <source>
        <dbReference type="PDB" id="4BZY"/>
    </source>
</evidence>
<evidence type="ECO:0007829" key="17">
    <source>
        <dbReference type="PDB" id="5CLT"/>
    </source>
</evidence>
<evidence type="ECO:0007829" key="18">
    <source>
        <dbReference type="PDB" id="5CLW"/>
    </source>
</evidence>
<name>GLGB_HUMAN</name>
<organism>
    <name type="scientific">Homo sapiens</name>
    <name type="common">Human</name>
    <dbReference type="NCBI Taxonomy" id="9606"/>
    <lineage>
        <taxon>Eukaryota</taxon>
        <taxon>Metazoa</taxon>
        <taxon>Chordata</taxon>
        <taxon>Craniata</taxon>
        <taxon>Vertebrata</taxon>
        <taxon>Euteleostomi</taxon>
        <taxon>Mammalia</taxon>
        <taxon>Eutheria</taxon>
        <taxon>Euarchontoglires</taxon>
        <taxon>Primates</taxon>
        <taxon>Haplorrhini</taxon>
        <taxon>Catarrhini</taxon>
        <taxon>Hominidae</taxon>
        <taxon>Homo</taxon>
    </lineage>
</organism>
<gene>
    <name type="primary">GBE1</name>
</gene>
<proteinExistence type="evidence at protein level"/>